<evidence type="ECO:0000250" key="1">
    <source>
        <dbReference type="UniProtKB" id="P36533"/>
    </source>
</evidence>
<evidence type="ECO:0000269" key="2">
    <source>
    </source>
</evidence>
<evidence type="ECO:0000305" key="3"/>
<dbReference type="EMBL" id="CU329671">
    <property type="protein sequence ID" value="CAA20728.1"/>
    <property type="molecule type" value="Genomic_DNA"/>
</dbReference>
<dbReference type="PIR" id="T40505">
    <property type="entry name" value="T40505"/>
</dbReference>
<dbReference type="RefSeq" id="NP_596108.1">
    <property type="nucleotide sequence ID" value="NM_001022025.2"/>
</dbReference>
<dbReference type="SMR" id="O74394"/>
<dbReference type="BioGRID" id="277399">
    <property type="interactions" value="37"/>
</dbReference>
<dbReference type="ComplexPortal" id="CPX-10323">
    <property type="entry name" value="54S mitochondrial large ribosomal subunit"/>
</dbReference>
<dbReference type="FunCoup" id="O74394">
    <property type="interactions" value="235"/>
</dbReference>
<dbReference type="STRING" id="284812.O74394"/>
<dbReference type="iPTMnet" id="O74394"/>
<dbReference type="PaxDb" id="4896-SPBC4F6.08c.1"/>
<dbReference type="EnsemblFungi" id="SPBC4F6.08c.1">
    <property type="protein sequence ID" value="SPBC4F6.08c.1:pep"/>
    <property type="gene ID" value="SPBC4F6.08c"/>
</dbReference>
<dbReference type="GeneID" id="2540882"/>
<dbReference type="KEGG" id="spo:2540882"/>
<dbReference type="PomBase" id="SPBC4F6.08c">
    <property type="gene designation" value="mrpl39"/>
</dbReference>
<dbReference type="VEuPathDB" id="FungiDB:SPBC4F6.08c"/>
<dbReference type="eggNOG" id="KOG3505">
    <property type="taxonomic scope" value="Eukaryota"/>
</dbReference>
<dbReference type="HOGENOM" id="CLU_190949_1_0_1"/>
<dbReference type="InParanoid" id="O74394"/>
<dbReference type="OMA" id="TCFNVKR"/>
<dbReference type="PhylomeDB" id="O74394"/>
<dbReference type="PRO" id="PR:O74394"/>
<dbReference type="Proteomes" id="UP000002485">
    <property type="component" value="Chromosome II"/>
</dbReference>
<dbReference type="GO" id="GO:0015934">
    <property type="term" value="C:large ribosomal subunit"/>
    <property type="evidence" value="ECO:0000318"/>
    <property type="project" value="GO_Central"/>
</dbReference>
<dbReference type="GO" id="GO:0005762">
    <property type="term" value="C:mitochondrial large ribosomal subunit"/>
    <property type="evidence" value="ECO:0000250"/>
    <property type="project" value="PomBase"/>
</dbReference>
<dbReference type="GO" id="GO:0005739">
    <property type="term" value="C:mitochondrion"/>
    <property type="evidence" value="ECO:0007005"/>
    <property type="project" value="PomBase"/>
</dbReference>
<dbReference type="GO" id="GO:0003735">
    <property type="term" value="F:structural constituent of ribosome"/>
    <property type="evidence" value="ECO:0000318"/>
    <property type="project" value="GO_Central"/>
</dbReference>
<dbReference type="GO" id="GO:0032543">
    <property type="term" value="P:mitochondrial translation"/>
    <property type="evidence" value="ECO:0000250"/>
    <property type="project" value="PomBase"/>
</dbReference>
<dbReference type="Gene3D" id="2.20.28.120">
    <property type="entry name" value="Ribosomal protein L33"/>
    <property type="match status" value="1"/>
</dbReference>
<dbReference type="InterPro" id="IPR001705">
    <property type="entry name" value="Ribosomal_bL33"/>
</dbReference>
<dbReference type="InterPro" id="IPR038584">
    <property type="entry name" value="Ribosomal_bL33_sf"/>
</dbReference>
<dbReference type="InterPro" id="IPR011332">
    <property type="entry name" value="Ribosomal_zn-bd"/>
</dbReference>
<dbReference type="NCBIfam" id="TIGR01023">
    <property type="entry name" value="rpmG_bact"/>
    <property type="match status" value="1"/>
</dbReference>
<dbReference type="PANTHER" id="PTHR15238">
    <property type="entry name" value="54S RIBOSOMAL PROTEIN L39, MITOCHONDRIAL"/>
    <property type="match status" value="1"/>
</dbReference>
<dbReference type="PANTHER" id="PTHR15238:SF1">
    <property type="entry name" value="LARGE RIBOSOMAL SUBUNIT PROTEIN BL33M"/>
    <property type="match status" value="1"/>
</dbReference>
<dbReference type="Pfam" id="PF00471">
    <property type="entry name" value="Ribosomal_L33"/>
    <property type="match status" value="1"/>
</dbReference>
<dbReference type="SUPFAM" id="SSF57829">
    <property type="entry name" value="Zn-binding ribosomal proteins"/>
    <property type="match status" value="1"/>
</dbReference>
<keyword id="KW-0496">Mitochondrion</keyword>
<keyword id="KW-1185">Reference proteome</keyword>
<keyword id="KW-0687">Ribonucleoprotein</keyword>
<keyword id="KW-0689">Ribosomal protein</keyword>
<sequence length="55" mass="6353">MAKKNKARLLVKLLSTAGTGFFYVRSRPKAAPKLAFIKYDPKIHKRVLFEESKMK</sequence>
<gene>
    <name type="primary">mrpl39</name>
    <name type="ORF">SPBC4F6.08c</name>
</gene>
<reference key="1">
    <citation type="journal article" date="2002" name="Nature">
        <title>The genome sequence of Schizosaccharomyces pombe.</title>
        <authorList>
            <person name="Wood V."/>
            <person name="Gwilliam R."/>
            <person name="Rajandream M.A."/>
            <person name="Lyne M.H."/>
            <person name="Lyne R."/>
            <person name="Stewart A."/>
            <person name="Sgouros J.G."/>
            <person name="Peat N."/>
            <person name="Hayles J."/>
            <person name="Baker S.G."/>
            <person name="Basham D."/>
            <person name="Bowman S."/>
            <person name="Brooks K."/>
            <person name="Brown D."/>
            <person name="Brown S."/>
            <person name="Chillingworth T."/>
            <person name="Churcher C.M."/>
            <person name="Collins M."/>
            <person name="Connor R."/>
            <person name="Cronin A."/>
            <person name="Davis P."/>
            <person name="Feltwell T."/>
            <person name="Fraser A."/>
            <person name="Gentles S."/>
            <person name="Goble A."/>
            <person name="Hamlin N."/>
            <person name="Harris D.E."/>
            <person name="Hidalgo J."/>
            <person name="Hodgson G."/>
            <person name="Holroyd S."/>
            <person name="Hornsby T."/>
            <person name="Howarth S."/>
            <person name="Huckle E.J."/>
            <person name="Hunt S."/>
            <person name="Jagels K."/>
            <person name="James K.D."/>
            <person name="Jones L."/>
            <person name="Jones M."/>
            <person name="Leather S."/>
            <person name="McDonald S."/>
            <person name="McLean J."/>
            <person name="Mooney P."/>
            <person name="Moule S."/>
            <person name="Mungall K.L."/>
            <person name="Murphy L.D."/>
            <person name="Niblett D."/>
            <person name="Odell C."/>
            <person name="Oliver K."/>
            <person name="O'Neil S."/>
            <person name="Pearson D."/>
            <person name="Quail M.A."/>
            <person name="Rabbinowitsch E."/>
            <person name="Rutherford K.M."/>
            <person name="Rutter S."/>
            <person name="Saunders D."/>
            <person name="Seeger K."/>
            <person name="Sharp S."/>
            <person name="Skelton J."/>
            <person name="Simmonds M.N."/>
            <person name="Squares R."/>
            <person name="Squares S."/>
            <person name="Stevens K."/>
            <person name="Taylor K."/>
            <person name="Taylor R.G."/>
            <person name="Tivey A."/>
            <person name="Walsh S.V."/>
            <person name="Warren T."/>
            <person name="Whitehead S."/>
            <person name="Woodward J.R."/>
            <person name="Volckaert G."/>
            <person name="Aert R."/>
            <person name="Robben J."/>
            <person name="Grymonprez B."/>
            <person name="Weltjens I."/>
            <person name="Vanstreels E."/>
            <person name="Rieger M."/>
            <person name="Schaefer M."/>
            <person name="Mueller-Auer S."/>
            <person name="Gabel C."/>
            <person name="Fuchs M."/>
            <person name="Duesterhoeft A."/>
            <person name="Fritzc C."/>
            <person name="Holzer E."/>
            <person name="Moestl D."/>
            <person name="Hilbert H."/>
            <person name="Borzym K."/>
            <person name="Langer I."/>
            <person name="Beck A."/>
            <person name="Lehrach H."/>
            <person name="Reinhardt R."/>
            <person name="Pohl T.M."/>
            <person name="Eger P."/>
            <person name="Zimmermann W."/>
            <person name="Wedler H."/>
            <person name="Wambutt R."/>
            <person name="Purnelle B."/>
            <person name="Goffeau A."/>
            <person name="Cadieu E."/>
            <person name="Dreano S."/>
            <person name="Gloux S."/>
            <person name="Lelaure V."/>
            <person name="Mottier S."/>
            <person name="Galibert F."/>
            <person name="Aves S.J."/>
            <person name="Xiang Z."/>
            <person name="Hunt C."/>
            <person name="Moore K."/>
            <person name="Hurst S.M."/>
            <person name="Lucas M."/>
            <person name="Rochet M."/>
            <person name="Gaillardin C."/>
            <person name="Tallada V.A."/>
            <person name="Garzon A."/>
            <person name="Thode G."/>
            <person name="Daga R.R."/>
            <person name="Cruzado L."/>
            <person name="Jimenez J."/>
            <person name="Sanchez M."/>
            <person name="del Rey F."/>
            <person name="Benito J."/>
            <person name="Dominguez A."/>
            <person name="Revuelta J.L."/>
            <person name="Moreno S."/>
            <person name="Armstrong J."/>
            <person name="Forsburg S.L."/>
            <person name="Cerutti L."/>
            <person name="Lowe T."/>
            <person name="McCombie W.R."/>
            <person name="Paulsen I."/>
            <person name="Potashkin J."/>
            <person name="Shpakovski G.V."/>
            <person name="Ussery D."/>
            <person name="Barrell B.G."/>
            <person name="Nurse P."/>
        </authorList>
    </citation>
    <scope>NUCLEOTIDE SEQUENCE [LARGE SCALE GENOMIC DNA]</scope>
    <source>
        <strain>972 / ATCC 24843</strain>
    </source>
</reference>
<reference key="2">
    <citation type="journal article" date="2006" name="Nat. Biotechnol.">
        <title>ORFeome cloning and global analysis of protein localization in the fission yeast Schizosaccharomyces pombe.</title>
        <authorList>
            <person name="Matsuyama A."/>
            <person name="Arai R."/>
            <person name="Yashiroda Y."/>
            <person name="Shirai A."/>
            <person name="Kamata A."/>
            <person name="Sekido S."/>
            <person name="Kobayashi Y."/>
            <person name="Hashimoto A."/>
            <person name="Hamamoto M."/>
            <person name="Hiraoka Y."/>
            <person name="Horinouchi S."/>
            <person name="Yoshida M."/>
        </authorList>
    </citation>
    <scope>SUBCELLULAR LOCATION [LARGE SCALE ANALYSIS]</scope>
</reference>
<organism>
    <name type="scientific">Schizosaccharomyces pombe (strain 972 / ATCC 24843)</name>
    <name type="common">Fission yeast</name>
    <dbReference type="NCBI Taxonomy" id="284812"/>
    <lineage>
        <taxon>Eukaryota</taxon>
        <taxon>Fungi</taxon>
        <taxon>Dikarya</taxon>
        <taxon>Ascomycota</taxon>
        <taxon>Taphrinomycotina</taxon>
        <taxon>Schizosaccharomycetes</taxon>
        <taxon>Schizosaccharomycetales</taxon>
        <taxon>Schizosaccharomycetaceae</taxon>
        <taxon>Schizosaccharomyces</taxon>
    </lineage>
</organism>
<comment type="function">
    <text evidence="1">Component of the mitochondrial ribosome (mitoribosome), a dedicated translation machinery responsible for the synthesis of mitochondrial genome-encoded proteins, including at least some of the essential transmembrane subunits of the mitochondrial respiratory chain. The mitoribosomes are attached to the mitochondrial inner membrane and translation products are cotranslationally integrated into the membrane.</text>
</comment>
<comment type="subunit">
    <text evidence="1">Component of the mitochondrial large ribosomal subunit (mt-LSU). Mature yeast 74S mitochondrial ribosomes consist of a small (37S) and a large (54S) subunit. The 37S small subunit contains a 15S ribosomal RNA (15S mt-rRNA) and at least 32 different proteins. The 54S large subunit contains a 21S rRNA (21S mt-rRNA) and at least 45 different proteins. bL33m stabilizes the tRNA acceptor stem in the E-site.</text>
</comment>
<comment type="subcellular location">
    <subcellularLocation>
        <location evidence="2">Mitochondrion</location>
    </subcellularLocation>
</comment>
<comment type="similarity">
    <text evidence="3">Belongs to the bacterial ribosomal protein bL33 family.</text>
</comment>
<proteinExistence type="inferred from homology"/>
<accession>O74394</accession>
<name>RM39_SCHPO</name>
<feature type="chain" id="PRO_0000350999" description="Large ribosomal subunit protein bL33m">
    <location>
        <begin position="1"/>
        <end position="55"/>
    </location>
</feature>
<protein>
    <recommendedName>
        <fullName evidence="3">Large ribosomal subunit protein bL33m</fullName>
    </recommendedName>
    <alternativeName>
        <fullName>54S ribosomal protein L39, mitochondrial</fullName>
    </alternativeName>
</protein>